<dbReference type="EC" id="2.5.1.78" evidence="1"/>
<dbReference type="EMBL" id="AL513382">
    <property type="protein sequence ID" value="CAD08873.1"/>
    <property type="molecule type" value="Genomic_DNA"/>
</dbReference>
<dbReference type="EMBL" id="AE014613">
    <property type="protein sequence ID" value="AAO70036.1"/>
    <property type="molecule type" value="Genomic_DNA"/>
</dbReference>
<dbReference type="RefSeq" id="NP_455011.1">
    <property type="nucleotide sequence ID" value="NC_003198.1"/>
</dbReference>
<dbReference type="SMR" id="P66039"/>
<dbReference type="STRING" id="220341.gene:17584478"/>
<dbReference type="KEGG" id="stt:t2446"/>
<dbReference type="KEGG" id="sty:STY0456"/>
<dbReference type="PATRIC" id="fig|220341.7.peg.457"/>
<dbReference type="eggNOG" id="COG0054">
    <property type="taxonomic scope" value="Bacteria"/>
</dbReference>
<dbReference type="HOGENOM" id="CLU_089358_1_1_6"/>
<dbReference type="OMA" id="CQGVTQG"/>
<dbReference type="OrthoDB" id="9809709at2"/>
<dbReference type="UniPathway" id="UPA00275">
    <property type="reaction ID" value="UER00404"/>
</dbReference>
<dbReference type="Proteomes" id="UP000000541">
    <property type="component" value="Chromosome"/>
</dbReference>
<dbReference type="Proteomes" id="UP000002670">
    <property type="component" value="Chromosome"/>
</dbReference>
<dbReference type="GO" id="GO:0005829">
    <property type="term" value="C:cytosol"/>
    <property type="evidence" value="ECO:0007669"/>
    <property type="project" value="TreeGrafter"/>
</dbReference>
<dbReference type="GO" id="GO:0009349">
    <property type="term" value="C:riboflavin synthase complex"/>
    <property type="evidence" value="ECO:0007669"/>
    <property type="project" value="InterPro"/>
</dbReference>
<dbReference type="GO" id="GO:0000906">
    <property type="term" value="F:6,7-dimethyl-8-ribityllumazine synthase activity"/>
    <property type="evidence" value="ECO:0007669"/>
    <property type="project" value="UniProtKB-UniRule"/>
</dbReference>
<dbReference type="GO" id="GO:0009231">
    <property type="term" value="P:riboflavin biosynthetic process"/>
    <property type="evidence" value="ECO:0007669"/>
    <property type="project" value="UniProtKB-UniRule"/>
</dbReference>
<dbReference type="CDD" id="cd09209">
    <property type="entry name" value="Lumazine_synthase-I"/>
    <property type="match status" value="1"/>
</dbReference>
<dbReference type="FunFam" id="3.40.50.960:FF:000001">
    <property type="entry name" value="6,7-dimethyl-8-ribityllumazine synthase"/>
    <property type="match status" value="1"/>
</dbReference>
<dbReference type="Gene3D" id="3.40.50.960">
    <property type="entry name" value="Lumazine/riboflavin synthase"/>
    <property type="match status" value="1"/>
</dbReference>
<dbReference type="HAMAP" id="MF_00178">
    <property type="entry name" value="Lumazine_synth"/>
    <property type="match status" value="1"/>
</dbReference>
<dbReference type="InterPro" id="IPR034964">
    <property type="entry name" value="LS"/>
</dbReference>
<dbReference type="InterPro" id="IPR002180">
    <property type="entry name" value="LS/RS"/>
</dbReference>
<dbReference type="InterPro" id="IPR036467">
    <property type="entry name" value="LS/RS_sf"/>
</dbReference>
<dbReference type="NCBIfam" id="TIGR00114">
    <property type="entry name" value="lumazine-synth"/>
    <property type="match status" value="1"/>
</dbReference>
<dbReference type="NCBIfam" id="NF000812">
    <property type="entry name" value="PRK00061.1-4"/>
    <property type="match status" value="1"/>
</dbReference>
<dbReference type="PANTHER" id="PTHR21058:SF0">
    <property type="entry name" value="6,7-DIMETHYL-8-RIBITYLLUMAZINE SYNTHASE"/>
    <property type="match status" value="1"/>
</dbReference>
<dbReference type="PANTHER" id="PTHR21058">
    <property type="entry name" value="6,7-DIMETHYL-8-RIBITYLLUMAZINE SYNTHASE DMRL SYNTHASE LUMAZINE SYNTHASE"/>
    <property type="match status" value="1"/>
</dbReference>
<dbReference type="Pfam" id="PF00885">
    <property type="entry name" value="DMRL_synthase"/>
    <property type="match status" value="1"/>
</dbReference>
<dbReference type="SUPFAM" id="SSF52121">
    <property type="entry name" value="Lumazine synthase"/>
    <property type="match status" value="1"/>
</dbReference>
<feature type="chain" id="PRO_0000134801" description="6,7-dimethyl-8-ribityllumazine synthase">
    <location>
        <begin position="1"/>
        <end position="156"/>
    </location>
</feature>
<feature type="active site" description="Proton donor" evidence="1">
    <location>
        <position position="89"/>
    </location>
</feature>
<feature type="binding site" evidence="1">
    <location>
        <position position="22"/>
    </location>
    <ligand>
        <name>5-amino-6-(D-ribitylamino)uracil</name>
        <dbReference type="ChEBI" id="CHEBI:15934"/>
    </ligand>
</feature>
<feature type="binding site" evidence="1">
    <location>
        <begin position="57"/>
        <end position="59"/>
    </location>
    <ligand>
        <name>5-amino-6-(D-ribitylamino)uracil</name>
        <dbReference type="ChEBI" id="CHEBI:15934"/>
    </ligand>
</feature>
<feature type="binding site" evidence="1">
    <location>
        <begin position="81"/>
        <end position="83"/>
    </location>
    <ligand>
        <name>5-amino-6-(D-ribitylamino)uracil</name>
        <dbReference type="ChEBI" id="CHEBI:15934"/>
    </ligand>
</feature>
<feature type="binding site" evidence="1">
    <location>
        <begin position="86"/>
        <end position="87"/>
    </location>
    <ligand>
        <name>(2S)-2-hydroxy-3-oxobutyl phosphate</name>
        <dbReference type="ChEBI" id="CHEBI:58830"/>
    </ligand>
</feature>
<feature type="binding site" evidence="1">
    <location>
        <position position="114"/>
    </location>
    <ligand>
        <name>5-amino-6-(D-ribitylamino)uracil</name>
        <dbReference type="ChEBI" id="CHEBI:15934"/>
    </ligand>
</feature>
<feature type="binding site" evidence="1">
    <location>
        <position position="128"/>
    </location>
    <ligand>
        <name>(2S)-2-hydroxy-3-oxobutyl phosphate</name>
        <dbReference type="ChEBI" id="CHEBI:58830"/>
    </ligand>
</feature>
<proteinExistence type="inferred from homology"/>
<protein>
    <recommendedName>
        <fullName evidence="1">6,7-dimethyl-8-ribityllumazine synthase</fullName>
        <shortName evidence="1">DMRL synthase</shortName>
        <shortName evidence="1">LS</shortName>
        <shortName evidence="1">Lumazine synthase</shortName>
        <ecNumber evidence="1">2.5.1.78</ecNumber>
    </recommendedName>
</protein>
<reference key="1">
    <citation type="journal article" date="2001" name="Nature">
        <title>Complete genome sequence of a multiple drug resistant Salmonella enterica serovar Typhi CT18.</title>
        <authorList>
            <person name="Parkhill J."/>
            <person name="Dougan G."/>
            <person name="James K.D."/>
            <person name="Thomson N.R."/>
            <person name="Pickard D."/>
            <person name="Wain J."/>
            <person name="Churcher C.M."/>
            <person name="Mungall K.L."/>
            <person name="Bentley S.D."/>
            <person name="Holden M.T.G."/>
            <person name="Sebaihia M."/>
            <person name="Baker S."/>
            <person name="Basham D."/>
            <person name="Brooks K."/>
            <person name="Chillingworth T."/>
            <person name="Connerton P."/>
            <person name="Cronin A."/>
            <person name="Davis P."/>
            <person name="Davies R.M."/>
            <person name="Dowd L."/>
            <person name="White N."/>
            <person name="Farrar J."/>
            <person name="Feltwell T."/>
            <person name="Hamlin N."/>
            <person name="Haque A."/>
            <person name="Hien T.T."/>
            <person name="Holroyd S."/>
            <person name="Jagels K."/>
            <person name="Krogh A."/>
            <person name="Larsen T.S."/>
            <person name="Leather S."/>
            <person name="Moule S."/>
            <person name="O'Gaora P."/>
            <person name="Parry C."/>
            <person name="Quail M.A."/>
            <person name="Rutherford K.M."/>
            <person name="Simmonds M."/>
            <person name="Skelton J."/>
            <person name="Stevens K."/>
            <person name="Whitehead S."/>
            <person name="Barrell B.G."/>
        </authorList>
    </citation>
    <scope>NUCLEOTIDE SEQUENCE [LARGE SCALE GENOMIC DNA]</scope>
    <source>
        <strain>CT18</strain>
    </source>
</reference>
<reference key="2">
    <citation type="journal article" date="2003" name="J. Bacteriol.">
        <title>Comparative genomics of Salmonella enterica serovar Typhi strains Ty2 and CT18.</title>
        <authorList>
            <person name="Deng W."/>
            <person name="Liou S.-R."/>
            <person name="Plunkett G. III"/>
            <person name="Mayhew G.F."/>
            <person name="Rose D.J."/>
            <person name="Burland V."/>
            <person name="Kodoyianni V."/>
            <person name="Schwartz D.C."/>
            <person name="Blattner F.R."/>
        </authorList>
    </citation>
    <scope>NUCLEOTIDE SEQUENCE [LARGE SCALE GENOMIC DNA]</scope>
    <source>
        <strain>ATCC 700931 / Ty2</strain>
    </source>
</reference>
<name>RISB_SALTI</name>
<accession>P66039</accession>
<accession>Q8XFI9</accession>
<comment type="function">
    <text evidence="1">Catalyzes the formation of 6,7-dimethyl-8-ribityllumazine by condensation of 5-amino-6-(D-ribitylamino)uracil with 3,4-dihydroxy-2-butanone 4-phosphate. This is the penultimate step in the biosynthesis of riboflavin.</text>
</comment>
<comment type="catalytic activity">
    <reaction evidence="1">
        <text>(2S)-2-hydroxy-3-oxobutyl phosphate + 5-amino-6-(D-ribitylamino)uracil = 6,7-dimethyl-8-(1-D-ribityl)lumazine + phosphate + 2 H2O + H(+)</text>
        <dbReference type="Rhea" id="RHEA:26152"/>
        <dbReference type="ChEBI" id="CHEBI:15377"/>
        <dbReference type="ChEBI" id="CHEBI:15378"/>
        <dbReference type="ChEBI" id="CHEBI:15934"/>
        <dbReference type="ChEBI" id="CHEBI:43474"/>
        <dbReference type="ChEBI" id="CHEBI:58201"/>
        <dbReference type="ChEBI" id="CHEBI:58830"/>
        <dbReference type="EC" id="2.5.1.78"/>
    </reaction>
</comment>
<comment type="pathway">
    <text evidence="1">Cofactor biosynthesis; riboflavin biosynthesis; riboflavin from 2-hydroxy-3-oxobutyl phosphate and 5-amino-6-(D-ribitylamino)uracil: step 1/2.</text>
</comment>
<comment type="subunit">
    <text evidence="1">Forms an icosahedral capsid composed of 60 subunits, arranged as a dodecamer of pentamers.</text>
</comment>
<comment type="similarity">
    <text evidence="1">Belongs to the DMRL synthase family.</text>
</comment>
<evidence type="ECO:0000255" key="1">
    <source>
        <dbReference type="HAMAP-Rule" id="MF_00178"/>
    </source>
</evidence>
<gene>
    <name evidence="1" type="primary">ribH</name>
    <name type="ordered locus">STY0456</name>
    <name type="ordered locus">t2446</name>
</gene>
<organism>
    <name type="scientific">Salmonella typhi</name>
    <dbReference type="NCBI Taxonomy" id="90370"/>
    <lineage>
        <taxon>Bacteria</taxon>
        <taxon>Pseudomonadati</taxon>
        <taxon>Pseudomonadota</taxon>
        <taxon>Gammaproteobacteria</taxon>
        <taxon>Enterobacterales</taxon>
        <taxon>Enterobacteriaceae</taxon>
        <taxon>Salmonella</taxon>
    </lineage>
</organism>
<keyword id="KW-0686">Riboflavin biosynthesis</keyword>
<keyword id="KW-0808">Transferase</keyword>
<sequence>MNIIKANVAAPDARVAITIARFNQFINDSLLDGAVDALTRIGQVKDDNITVVWVPGAYELPLATEALAKSGKYDAVVALGTVIRGGTAHFEYVAGGASNGLASVAQDSGVPVAFGVLTTESIEQAIERAGTKAGNKGAEAALTALEMINVLKAIKA</sequence>